<proteinExistence type="evidence at protein level"/>
<keyword id="KW-0025">Alternative splicing</keyword>
<keyword id="KW-0238">DNA-binding</keyword>
<keyword id="KW-0489">Methyltransferase</keyword>
<keyword id="KW-0539">Nucleus</keyword>
<keyword id="KW-1185">Reference proteome</keyword>
<keyword id="KW-0677">Repeat</keyword>
<keyword id="KW-0949">S-adenosyl-L-methionine</keyword>
<keyword id="KW-0808">Transferase</keyword>
<dbReference type="EC" id="2.1.1.37" evidence="8"/>
<dbReference type="EMBL" id="AB524355">
    <property type="protein sequence ID" value="BAI66065.1"/>
    <property type="molecule type" value="mRNA"/>
</dbReference>
<dbReference type="EMBL" id="AC105733">
    <property type="protein sequence ID" value="AAN61474.1"/>
    <property type="status" value="ALT_SEQ"/>
    <property type="molecule type" value="Genomic_DNA"/>
</dbReference>
<dbReference type="EMBL" id="DP000009">
    <property type="protein sequence ID" value="ABF93590.1"/>
    <property type="molecule type" value="Genomic_DNA"/>
</dbReference>
<dbReference type="EMBL" id="DP000009">
    <property type="protein sequence ID" value="ABF93591.1"/>
    <property type="molecule type" value="Genomic_DNA"/>
</dbReference>
<dbReference type="EMBL" id="DP000009">
    <property type="protein sequence ID" value="ABF93592.1"/>
    <property type="status" value="ALT_SEQ"/>
    <property type="molecule type" value="Genomic_DNA"/>
</dbReference>
<dbReference type="EMBL" id="DP000009">
    <property type="protein sequence ID" value="ABF93593.1"/>
    <property type="status" value="ALT_SEQ"/>
    <property type="molecule type" value="Genomic_DNA"/>
</dbReference>
<dbReference type="EMBL" id="AP008209">
    <property type="protein sequence ID" value="BAF10632.1"/>
    <property type="molecule type" value="Genomic_DNA"/>
</dbReference>
<dbReference type="EMBL" id="AP014959">
    <property type="protein sequence ID" value="BAS81924.1"/>
    <property type="molecule type" value="Genomic_DNA"/>
</dbReference>
<dbReference type="SMR" id="Q10SU5"/>
<dbReference type="FunCoup" id="Q10SU5">
    <property type="interactions" value="2661"/>
</dbReference>
<dbReference type="STRING" id="39947.Q10SU5"/>
<dbReference type="REBASE" id="11926">
    <property type="entry name" value="M.OsaDRM2"/>
</dbReference>
<dbReference type="PaxDb" id="39947-Q10SU5"/>
<dbReference type="KEGG" id="dosa:Os03g0110800"/>
<dbReference type="eggNOG" id="ENOG502QVZV">
    <property type="taxonomic scope" value="Eukaryota"/>
</dbReference>
<dbReference type="InParanoid" id="Q10SU5"/>
<dbReference type="OMA" id="FMGMGFP"/>
<dbReference type="BRENDA" id="2.1.1.37">
    <property type="organism ID" value="4460"/>
</dbReference>
<dbReference type="Proteomes" id="UP000000763">
    <property type="component" value="Chromosome 3"/>
</dbReference>
<dbReference type="Proteomes" id="UP000059680">
    <property type="component" value="Chromosome 3"/>
</dbReference>
<dbReference type="GO" id="GO:0005634">
    <property type="term" value="C:nucleus"/>
    <property type="evidence" value="ECO:0000314"/>
    <property type="project" value="UniProtKB"/>
</dbReference>
<dbReference type="GO" id="GO:0003886">
    <property type="term" value="F:DNA (cytosine-5-)-methyltransferase activity"/>
    <property type="evidence" value="ECO:0000318"/>
    <property type="project" value="GO_Central"/>
</dbReference>
<dbReference type="GO" id="GO:0003677">
    <property type="term" value="F:DNA binding"/>
    <property type="evidence" value="ECO:0007669"/>
    <property type="project" value="UniProtKB-KW"/>
</dbReference>
<dbReference type="GO" id="GO:0032259">
    <property type="term" value="P:methylation"/>
    <property type="evidence" value="ECO:0007669"/>
    <property type="project" value="UniProtKB-KW"/>
</dbReference>
<dbReference type="FunFam" id="3.40.50.150:FF:000360">
    <property type="entry name" value="DNA (cytosine-5)-methyltransferase DRM2"/>
    <property type="match status" value="1"/>
</dbReference>
<dbReference type="FunFam" id="3.40.50.150:FF:000519">
    <property type="entry name" value="DNA (cytosine-5)-methyltransferase DRM2"/>
    <property type="match status" value="1"/>
</dbReference>
<dbReference type="Gene3D" id="1.10.8.10">
    <property type="entry name" value="DNA helicase RuvA subunit, C-terminal domain"/>
    <property type="match status" value="1"/>
</dbReference>
<dbReference type="Gene3D" id="3.40.50.150">
    <property type="entry name" value="Vaccinia Virus protein VP39"/>
    <property type="match status" value="2"/>
</dbReference>
<dbReference type="InterPro" id="IPR001525">
    <property type="entry name" value="C5_MeTfrase"/>
</dbReference>
<dbReference type="InterPro" id="IPR029063">
    <property type="entry name" value="SAM-dependent_MTases_sf"/>
</dbReference>
<dbReference type="InterPro" id="IPR030380">
    <property type="entry name" value="SAM_MeTfrase_DRM"/>
</dbReference>
<dbReference type="InterPro" id="IPR015940">
    <property type="entry name" value="UBA"/>
</dbReference>
<dbReference type="InterPro" id="IPR009060">
    <property type="entry name" value="UBA-like_sf"/>
</dbReference>
<dbReference type="PANTHER" id="PTHR23068:SF25">
    <property type="entry name" value="DNA (CYTOSINE-5)-METHYLTRANSFERASE DRM2"/>
    <property type="match status" value="1"/>
</dbReference>
<dbReference type="PANTHER" id="PTHR23068">
    <property type="entry name" value="DNA CYTOSINE-5- -METHYLTRANSFERASE 3-RELATED"/>
    <property type="match status" value="1"/>
</dbReference>
<dbReference type="Pfam" id="PF00145">
    <property type="entry name" value="DNA_methylase"/>
    <property type="match status" value="1"/>
</dbReference>
<dbReference type="SUPFAM" id="SSF53335">
    <property type="entry name" value="S-adenosyl-L-methionine-dependent methyltransferases"/>
    <property type="match status" value="2"/>
</dbReference>
<dbReference type="SUPFAM" id="SSF46934">
    <property type="entry name" value="UBA-like"/>
    <property type="match status" value="1"/>
</dbReference>
<dbReference type="PROSITE" id="PS51680">
    <property type="entry name" value="SAM_MT_DRM"/>
    <property type="match status" value="1"/>
</dbReference>
<dbReference type="PROSITE" id="PS50030">
    <property type="entry name" value="UBA"/>
    <property type="match status" value="1"/>
</dbReference>
<evidence type="ECO:0000255" key="1">
    <source>
        <dbReference type="PROSITE-ProRule" id="PRU00212"/>
    </source>
</evidence>
<evidence type="ECO:0000255" key="2">
    <source>
        <dbReference type="PROSITE-ProRule" id="PRU01017"/>
    </source>
</evidence>
<evidence type="ECO:0000256" key="3">
    <source>
        <dbReference type="SAM" id="MobiDB-lite"/>
    </source>
</evidence>
<evidence type="ECO:0000269" key="4">
    <source>
    </source>
</evidence>
<evidence type="ECO:0000269" key="5">
    <source>
    </source>
</evidence>
<evidence type="ECO:0000269" key="6">
    <source>
    </source>
</evidence>
<evidence type="ECO:0000303" key="7">
    <source>
    </source>
</evidence>
<evidence type="ECO:0000305" key="8"/>
<evidence type="ECO:0000312" key="9">
    <source>
        <dbReference type="EMBL" id="AAN61474.1"/>
    </source>
</evidence>
<evidence type="ECO:0000312" key="10">
    <source>
        <dbReference type="EMBL" id="ABF93591.1"/>
    </source>
</evidence>
<evidence type="ECO:0000312" key="11">
    <source>
        <dbReference type="EMBL" id="BAS81924.1"/>
    </source>
</evidence>
<name>DRM2_ORYSJ</name>
<protein>
    <recommendedName>
        <fullName evidence="8">DNA (cytosine-5)-methyltransferase DRM2</fullName>
        <ecNumber evidence="8">2.1.1.37</ecNumber>
    </recommendedName>
    <alternativeName>
        <fullName evidence="7">OsDRM2</fullName>
    </alternativeName>
    <alternativeName>
        <fullName evidence="8">Protein DOMAINS REARRANGED METHYLASE 2</fullName>
    </alternativeName>
</protein>
<comment type="function">
    <text evidence="6">Involved in de novo DNA methylation. Required for CpG and non-CpG methylation. Required for normal establishment and maintenance of RNA-directed DNA methylation (RdDM) mediated by small interfering RNAs (siRNAs). Regulates proper plant development in both vegetative and reproductive stages through DNA methylation.</text>
</comment>
<comment type="catalytic activity">
    <reaction evidence="2">
        <text>a 2'-deoxycytidine in DNA + S-adenosyl-L-methionine = a 5-methyl-2'-deoxycytidine in DNA + S-adenosyl-L-homocysteine + H(+)</text>
        <dbReference type="Rhea" id="RHEA:13681"/>
        <dbReference type="Rhea" id="RHEA-COMP:11369"/>
        <dbReference type="Rhea" id="RHEA-COMP:11370"/>
        <dbReference type="ChEBI" id="CHEBI:15378"/>
        <dbReference type="ChEBI" id="CHEBI:57856"/>
        <dbReference type="ChEBI" id="CHEBI:59789"/>
        <dbReference type="ChEBI" id="CHEBI:85452"/>
        <dbReference type="ChEBI" id="CHEBI:85454"/>
        <dbReference type="EC" id="2.1.1.37"/>
    </reaction>
</comment>
<comment type="subunit">
    <text evidence="5">Interacts (via UBA domains) with EIF4A.</text>
</comment>
<comment type="subcellular location">
    <subcellularLocation>
        <location evidence="4 5">Nucleus</location>
    </subcellularLocation>
</comment>
<comment type="alternative products">
    <event type="alternative splicing"/>
    <isoform>
        <id>Q10SU5-1</id>
        <name>1</name>
        <sequence type="displayed"/>
    </isoform>
    <isoform>
        <id>Q10SU5-2</id>
        <name>2</name>
        <sequence type="described" ref="VSP_058616"/>
    </isoform>
</comment>
<comment type="disruption phenotype">
    <text evidence="6">Pleiotropic developmental defects such as growth defects, semi-dwarfed phenotype, reductions in tiller number, delayed heading or no heading, abnormal panicle and spikelet morphology, and complete sterility.</text>
</comment>
<comment type="miscellaneous">
    <molecule>Isoform 2</molecule>
    <text evidence="8">May be due to a competing donor splice site.</text>
</comment>
<comment type="similarity">
    <text evidence="2">Belongs to the class I-like SAM-binding methyltransferase superfamily. DRM-methyltransferase family.</text>
</comment>
<comment type="sequence caution" evidence="8">
    <conflict type="erroneous gene model prediction">
        <sequence resource="EMBL-CDS" id="AAN61474"/>
    </conflict>
</comment>
<comment type="sequence caution" evidence="8">
    <conflict type="erroneous gene model prediction">
        <sequence resource="EMBL-CDS" id="ABF93592"/>
    </conflict>
</comment>
<comment type="sequence caution" evidence="8">
    <conflict type="erroneous gene model prediction">
        <sequence resource="EMBL-CDS" id="ABF93593"/>
    </conflict>
</comment>
<sequence length="598" mass="66788">MVDWASDSDNDKFEWDTDGEAETSSAPALRNIDAPGPSTRLPQDANGKANGSGALVAEFMGMGFPKEMILKAIKEIGDTDTEQLLELLLTYQAIGGDASVGNCSASACAPQTLEVDEEEDDTNWDEYDTAGNCDRTPHSDGSGDEDFFQEMSEKDEKMKSLVNMGFPEDEAKMAIDRCGLDAPVAVLVDSIYASQEAGNGYSANLSDYEDTEFSSFGGRKKTRFVDGSKKRKRYGSGPSGNQVPFDGSHEEPMPLPNPMVGFSLPNERLRSVHRNLPDQALGPPFFYYENVALAPKGVWTTISRFLYDIQPEFVDSKYFCAAARKRGYIHNLPIENRSPVLPMPPKTISEAFPNTKRWWPSWDPRRQFNCLQTCMASAKLTERIRCALGRFSDVPTPQVQKYVLDECRKWNLVWVGKNKVAPLEPDEMEFLLGYPRNHTRGVSRTERYRALGNSFQVDTVAYHLSVLRDLFPNGMNVLSLFSGIGGAEVALHRLGIHMKTVISVEKSEVNRTILKSWWDQTQTGTLIEIADVRHLTTERIETFIRRFGGFDLVIGGSPCNNLAGSNRHHRDGLEGEHSALFYDYIRILEHVKATMSAV</sequence>
<feature type="chain" id="PRO_0000438153" description="DNA (cytosine-5)-methyltransferase DRM2">
    <location>
        <begin position="1"/>
        <end position="598"/>
    </location>
</feature>
<feature type="domain" description="UBA 1" evidence="1">
    <location>
        <begin position="42"/>
        <end position="91"/>
    </location>
</feature>
<feature type="domain" description="UBA 2" evidence="1">
    <location>
        <begin position="150"/>
        <end position="194"/>
    </location>
</feature>
<feature type="domain" description="SAM-dependent MTase DRM-type" evidence="2">
    <location>
        <begin position="272"/>
        <end position="598"/>
    </location>
</feature>
<feature type="region of interest" description="Disordered" evidence="3">
    <location>
        <begin position="1"/>
        <end position="49"/>
    </location>
</feature>
<feature type="region of interest" description="Disordered" evidence="3">
    <location>
        <begin position="114"/>
        <end position="146"/>
    </location>
</feature>
<feature type="region of interest" description="Disordered" evidence="3">
    <location>
        <begin position="227"/>
        <end position="252"/>
    </location>
</feature>
<feature type="compositionally biased region" description="Acidic residues" evidence="3">
    <location>
        <begin position="114"/>
        <end position="128"/>
    </location>
</feature>
<feature type="splice variant" id="VSP_058616" description="In isoform 2.">
    <location>
        <position position="179"/>
    </location>
</feature>
<organism>
    <name type="scientific">Oryza sativa subsp. japonica</name>
    <name type="common">Rice</name>
    <dbReference type="NCBI Taxonomy" id="39947"/>
    <lineage>
        <taxon>Eukaryota</taxon>
        <taxon>Viridiplantae</taxon>
        <taxon>Streptophyta</taxon>
        <taxon>Embryophyta</taxon>
        <taxon>Tracheophyta</taxon>
        <taxon>Spermatophyta</taxon>
        <taxon>Magnoliopsida</taxon>
        <taxon>Liliopsida</taxon>
        <taxon>Poales</taxon>
        <taxon>Poaceae</taxon>
        <taxon>BOP clade</taxon>
        <taxon>Oryzoideae</taxon>
        <taxon>Oryzeae</taxon>
        <taxon>Oryzinae</taxon>
        <taxon>Oryza</taxon>
        <taxon>Oryza sativa</taxon>
    </lineage>
</organism>
<gene>
    <name evidence="7" type="primary">DRM2</name>
    <name evidence="11" type="ordered locus">Os03g0110800</name>
    <name evidence="10" type="ordered locus">LOC_Os03g02010</name>
    <name evidence="9" type="ORF">OSJNBb0043C10.1</name>
</gene>
<reference key="1">
    <citation type="journal article" date="2012" name="Plant J.">
        <title>Targeted disruption of an orthologue of DOMAINS REARRANGED METHYLASE 2, OsDRM2, impairs the growth of rice plants by abnormal DNA methylation.</title>
        <authorList>
            <person name="Moritoh S."/>
            <person name="Eun C.H."/>
            <person name="Ono A."/>
            <person name="Asao H."/>
            <person name="Okano Y."/>
            <person name="Yamaguchi K."/>
            <person name="Shimatani Z."/>
            <person name="Koizumi A."/>
            <person name="Terada R."/>
        </authorList>
    </citation>
    <scope>NUCLEOTIDE SEQUENCE [MRNA] (ISOFORM 1)</scope>
    <scope>FUNCTION</scope>
    <scope>SUBCELLULAR LOCATION</scope>
    <scope>DISRUPTION PHENOTYPE</scope>
    <source>
        <strain>cv. Nipponbare</strain>
        <tissue>Callus</tissue>
    </source>
</reference>
<reference key="2">
    <citation type="journal article" date="2005" name="Genome Res.">
        <title>Sequence, annotation, and analysis of synteny between rice chromosome 3 and diverged grass species.</title>
        <authorList>
            <consortium name="The rice chromosome 3 sequencing consortium"/>
            <person name="Buell C.R."/>
            <person name="Yuan Q."/>
            <person name="Ouyang S."/>
            <person name="Liu J."/>
            <person name="Zhu W."/>
            <person name="Wang A."/>
            <person name="Maiti R."/>
            <person name="Haas B."/>
            <person name="Wortman J."/>
            <person name="Pertea M."/>
            <person name="Jones K.M."/>
            <person name="Kim M."/>
            <person name="Overton L."/>
            <person name="Tsitrin T."/>
            <person name="Fadrosh D."/>
            <person name="Bera J."/>
            <person name="Weaver B."/>
            <person name="Jin S."/>
            <person name="Johri S."/>
            <person name="Reardon M."/>
            <person name="Webb K."/>
            <person name="Hill J."/>
            <person name="Moffat K."/>
            <person name="Tallon L."/>
            <person name="Van Aken S."/>
            <person name="Lewis M."/>
            <person name="Utterback T."/>
            <person name="Feldblyum T."/>
            <person name="Zismann V."/>
            <person name="Iobst S."/>
            <person name="Hsiao J."/>
            <person name="de Vazeille A.R."/>
            <person name="Salzberg S.L."/>
            <person name="White O."/>
            <person name="Fraser C.M."/>
            <person name="Yu Y."/>
            <person name="Kim H."/>
            <person name="Rambo T."/>
            <person name="Currie J."/>
            <person name="Collura K."/>
            <person name="Kernodle-Thompson S."/>
            <person name="Wei F."/>
            <person name="Kudrna K."/>
            <person name="Ammiraju J.S.S."/>
            <person name="Luo M."/>
            <person name="Goicoechea J.L."/>
            <person name="Wing R.A."/>
            <person name="Henry D."/>
            <person name="Oates R."/>
            <person name="Palmer M."/>
            <person name="Pries G."/>
            <person name="Saski C."/>
            <person name="Simmons J."/>
            <person name="Soderlund C."/>
            <person name="Nelson W."/>
            <person name="de la Bastide M."/>
            <person name="Spiegel L."/>
            <person name="Nascimento L."/>
            <person name="Huang E."/>
            <person name="Preston R."/>
            <person name="Zutavern T."/>
            <person name="Palmer L."/>
            <person name="O'Shaughnessy A."/>
            <person name="Dike S."/>
            <person name="McCombie W.R."/>
            <person name="Minx P."/>
            <person name="Cordum H."/>
            <person name="Wilson R."/>
            <person name="Jin W."/>
            <person name="Lee H.R."/>
            <person name="Jiang J."/>
            <person name="Jackson S."/>
        </authorList>
    </citation>
    <scope>NUCLEOTIDE SEQUENCE [LARGE SCALE GENOMIC DNA]</scope>
    <source>
        <strain>cv. Nipponbare</strain>
    </source>
</reference>
<reference key="3">
    <citation type="journal article" date="2005" name="Nature">
        <title>The map-based sequence of the rice genome.</title>
        <authorList>
            <consortium name="International rice genome sequencing project (IRGSP)"/>
        </authorList>
    </citation>
    <scope>NUCLEOTIDE SEQUENCE [LARGE SCALE GENOMIC DNA]</scope>
    <source>
        <strain>cv. Nipponbare</strain>
    </source>
</reference>
<reference key="4">
    <citation type="journal article" date="2008" name="Nucleic Acids Res.">
        <title>The rice annotation project database (RAP-DB): 2008 update.</title>
        <authorList>
            <consortium name="The rice annotation project (RAP)"/>
        </authorList>
    </citation>
    <scope>GENOME REANNOTATION</scope>
    <source>
        <strain>cv. Nipponbare</strain>
    </source>
</reference>
<reference key="5">
    <citation type="journal article" date="2013" name="Rice">
        <title>Improvement of the Oryza sativa Nipponbare reference genome using next generation sequence and optical map data.</title>
        <authorList>
            <person name="Kawahara Y."/>
            <person name="de la Bastide M."/>
            <person name="Hamilton J.P."/>
            <person name="Kanamori H."/>
            <person name="McCombie W.R."/>
            <person name="Ouyang S."/>
            <person name="Schwartz D.C."/>
            <person name="Tanaka T."/>
            <person name="Wu J."/>
            <person name="Zhou S."/>
            <person name="Childs K.L."/>
            <person name="Davidson R.M."/>
            <person name="Lin H."/>
            <person name="Quesada-Ocampo L."/>
            <person name="Vaillancourt B."/>
            <person name="Sakai H."/>
            <person name="Lee S.S."/>
            <person name="Kim J."/>
            <person name="Numa H."/>
            <person name="Itoh T."/>
            <person name="Buell C.R."/>
            <person name="Matsumoto T."/>
        </authorList>
    </citation>
    <scope>GENOME REANNOTATION</scope>
    <source>
        <strain>cv. Nipponbare</strain>
    </source>
</reference>
<reference key="6">
    <citation type="journal article" date="2013" name="J. Mol. Biol.">
        <title>De novo methyltransferase, OsDRM2, interacts with the ATP-dependent RNA helicase, OseIF4A, in rice.</title>
        <authorList>
            <person name="Dangwal M."/>
            <person name="Malik G."/>
            <person name="Kapoor S."/>
            <person name="Kapoor M."/>
        </authorList>
    </citation>
    <scope>INTERACTION WITH EIF4A</scope>
    <scope>SUBCELLULAR LOCATION</scope>
</reference>
<accession>Q10SU5</accession>
<accession>Q10SU3</accession>
<accession>Q10SU4</accession>
<accession>Q10SU6</accession>
<accession>Q8H7W0</accession>